<accession>A1R8Y2</accession>
<feature type="chain" id="PRO_0000400238" description="Mycothiol acetyltransferase">
    <location>
        <begin position="1"/>
        <end position="323"/>
    </location>
</feature>
<feature type="domain" description="N-acetyltransferase 1" evidence="1">
    <location>
        <begin position="21"/>
        <end position="176"/>
    </location>
</feature>
<feature type="domain" description="N-acetyltransferase 2" evidence="1">
    <location>
        <begin position="173"/>
        <end position="323"/>
    </location>
</feature>
<feature type="binding site" evidence="1">
    <location>
        <position position="44"/>
    </location>
    <ligand>
        <name>1D-myo-inositol 2-(L-cysteinylamino)-2-deoxy-alpha-D-glucopyranoside</name>
        <dbReference type="ChEBI" id="CHEBI:58887"/>
    </ligand>
</feature>
<feature type="binding site" evidence="1">
    <location>
        <begin position="98"/>
        <end position="100"/>
    </location>
    <ligand>
        <name>acetyl-CoA</name>
        <dbReference type="ChEBI" id="CHEBI:57288"/>
        <label>1</label>
    </ligand>
</feature>
<feature type="binding site" evidence="1">
    <location>
        <position position="200"/>
    </location>
    <ligand>
        <name>1D-myo-inositol 2-(L-cysteinylamino)-2-deoxy-alpha-D-glucopyranoside</name>
        <dbReference type="ChEBI" id="CHEBI:58887"/>
    </ligand>
</feature>
<feature type="binding site" evidence="1">
    <location>
        <position position="240"/>
    </location>
    <ligand>
        <name>1D-myo-inositol 2-(L-cysteinylamino)-2-deoxy-alpha-D-glucopyranoside</name>
        <dbReference type="ChEBI" id="CHEBI:58887"/>
    </ligand>
</feature>
<feature type="binding site" evidence="1">
    <location>
        <position position="253"/>
    </location>
    <ligand>
        <name>1D-myo-inositol 2-(L-cysteinylamino)-2-deoxy-alpha-D-glucopyranoside</name>
        <dbReference type="ChEBI" id="CHEBI:58887"/>
    </ligand>
</feature>
<feature type="binding site" evidence="1">
    <location>
        <begin position="257"/>
        <end position="259"/>
    </location>
    <ligand>
        <name>acetyl-CoA</name>
        <dbReference type="ChEBI" id="CHEBI:57288"/>
        <label>2</label>
    </ligand>
</feature>
<feature type="binding site" evidence="1">
    <location>
        <begin position="264"/>
        <end position="270"/>
    </location>
    <ligand>
        <name>acetyl-CoA</name>
        <dbReference type="ChEBI" id="CHEBI:57288"/>
        <label>2</label>
    </ligand>
</feature>
<feature type="binding site" evidence="1">
    <location>
        <position position="291"/>
    </location>
    <ligand>
        <name>1D-myo-inositol 2-(L-cysteinylamino)-2-deoxy-alpha-D-glucopyranoside</name>
        <dbReference type="ChEBI" id="CHEBI:58887"/>
    </ligand>
</feature>
<keyword id="KW-0012">Acyltransferase</keyword>
<keyword id="KW-0677">Repeat</keyword>
<keyword id="KW-0808">Transferase</keyword>
<dbReference type="EC" id="2.3.1.189" evidence="1"/>
<dbReference type="EMBL" id="CP000474">
    <property type="protein sequence ID" value="ABM08243.1"/>
    <property type="molecule type" value="Genomic_DNA"/>
</dbReference>
<dbReference type="RefSeq" id="WP_011775629.1">
    <property type="nucleotide sequence ID" value="NC_008711.1"/>
</dbReference>
<dbReference type="SMR" id="A1R8Y2"/>
<dbReference type="STRING" id="290340.AAur_2987"/>
<dbReference type="DNASU" id="4640769"/>
<dbReference type="KEGG" id="aau:AAur_2987"/>
<dbReference type="eggNOG" id="COG0456">
    <property type="taxonomic scope" value="Bacteria"/>
</dbReference>
<dbReference type="HOGENOM" id="CLU_068014_0_0_11"/>
<dbReference type="OrthoDB" id="3208058at2"/>
<dbReference type="Proteomes" id="UP000000637">
    <property type="component" value="Chromosome"/>
</dbReference>
<dbReference type="GO" id="GO:0035447">
    <property type="term" value="F:mycothiol synthase activity"/>
    <property type="evidence" value="ECO:0007669"/>
    <property type="project" value="UniProtKB-UniRule"/>
</dbReference>
<dbReference type="GO" id="GO:0008999">
    <property type="term" value="F:protein-N-terminal-alanine acetyltransferase activity"/>
    <property type="evidence" value="ECO:0007669"/>
    <property type="project" value="TreeGrafter"/>
</dbReference>
<dbReference type="GO" id="GO:0010125">
    <property type="term" value="P:mycothiol biosynthetic process"/>
    <property type="evidence" value="ECO:0007669"/>
    <property type="project" value="UniProtKB-UniRule"/>
</dbReference>
<dbReference type="CDD" id="cd04301">
    <property type="entry name" value="NAT_SF"/>
    <property type="match status" value="2"/>
</dbReference>
<dbReference type="Gene3D" id="3.40.630.30">
    <property type="match status" value="1"/>
</dbReference>
<dbReference type="HAMAP" id="MF_01698">
    <property type="entry name" value="MshD"/>
    <property type="match status" value="1"/>
</dbReference>
<dbReference type="InterPro" id="IPR016181">
    <property type="entry name" value="Acyl_CoA_acyltransferase"/>
</dbReference>
<dbReference type="InterPro" id="IPR000182">
    <property type="entry name" value="GNAT_dom"/>
</dbReference>
<dbReference type="InterPro" id="IPR050276">
    <property type="entry name" value="MshD_Acetyltransferase"/>
</dbReference>
<dbReference type="InterPro" id="IPR017813">
    <property type="entry name" value="Mycothiol_AcTrfase"/>
</dbReference>
<dbReference type="NCBIfam" id="TIGR03448">
    <property type="entry name" value="mycothiol_MshD"/>
    <property type="match status" value="1"/>
</dbReference>
<dbReference type="PANTHER" id="PTHR43617">
    <property type="entry name" value="L-AMINO ACID N-ACETYLTRANSFERASE"/>
    <property type="match status" value="1"/>
</dbReference>
<dbReference type="PANTHER" id="PTHR43617:SF31">
    <property type="entry name" value="MYCOTHIOL ACETYLTRANSFERASE"/>
    <property type="match status" value="1"/>
</dbReference>
<dbReference type="Pfam" id="PF00583">
    <property type="entry name" value="Acetyltransf_1"/>
    <property type="match status" value="1"/>
</dbReference>
<dbReference type="Pfam" id="PF13508">
    <property type="entry name" value="Acetyltransf_7"/>
    <property type="match status" value="1"/>
</dbReference>
<dbReference type="PIRSF" id="PIRSF021524">
    <property type="entry name" value="MSH_acetyltransferase"/>
    <property type="match status" value="1"/>
</dbReference>
<dbReference type="SUPFAM" id="SSF55729">
    <property type="entry name" value="Acyl-CoA N-acyltransferases (Nat)"/>
    <property type="match status" value="1"/>
</dbReference>
<dbReference type="PROSITE" id="PS51186">
    <property type="entry name" value="GNAT"/>
    <property type="match status" value="2"/>
</dbReference>
<gene>
    <name evidence="1" type="primary">mshD</name>
    <name type="ordered locus">AAur_2987</name>
</gene>
<sequence length="323" mass="34421">MSHAHPENWPVLIIAGALDTELLRDVKTLAAAAGESDGNPPFSEQTLVTLRGADAGDHSVLSFVLYAPDEDSDPATAEDLAGVAVVVENGDESGVLELAVHPSYRNQGVAGRLLDALQGKRGLGGLSAWSHGNHEAAAELATRFGYGPVRELWKMRLMSSTSALPDAGLPDGVSLRAFVPGQDEQAWLTANSAAFSHHPEQGSMTRADLEARKAEDWFDPEGFLLAVNAEGELLGFHWTKVHPRQGPHPAIGEVYVVGVTPEAQGLGLGKALTVAGIKHLQDQGLHAVMLYVDADNEAAVALYQKLGFVRWDTDVMYGPLTKN</sequence>
<proteinExistence type="inferred from homology"/>
<evidence type="ECO:0000255" key="1">
    <source>
        <dbReference type="HAMAP-Rule" id="MF_01698"/>
    </source>
</evidence>
<protein>
    <recommendedName>
        <fullName evidence="1">Mycothiol acetyltransferase</fullName>
        <shortName evidence="1">MSH acetyltransferase</shortName>
        <ecNumber evidence="1">2.3.1.189</ecNumber>
    </recommendedName>
    <alternativeName>
        <fullName evidence="1">Mycothiol synthase</fullName>
    </alternativeName>
</protein>
<comment type="function">
    <text evidence="1">Catalyzes the transfer of acetyl from acetyl-CoA to desacetylmycothiol (Cys-GlcN-Ins) to form mycothiol.</text>
</comment>
<comment type="catalytic activity">
    <reaction evidence="1">
        <text>1D-myo-inositol 2-(L-cysteinylamino)-2-deoxy-alpha-D-glucopyranoside + acetyl-CoA = mycothiol + CoA + H(+)</text>
        <dbReference type="Rhea" id="RHEA:26172"/>
        <dbReference type="ChEBI" id="CHEBI:15378"/>
        <dbReference type="ChEBI" id="CHEBI:16768"/>
        <dbReference type="ChEBI" id="CHEBI:57287"/>
        <dbReference type="ChEBI" id="CHEBI:57288"/>
        <dbReference type="ChEBI" id="CHEBI:58887"/>
        <dbReference type="EC" id="2.3.1.189"/>
    </reaction>
</comment>
<comment type="subunit">
    <text evidence="1">Monomer.</text>
</comment>
<comment type="similarity">
    <text evidence="1">Belongs to the acetyltransferase family. MshD subfamily.</text>
</comment>
<organism>
    <name type="scientific">Paenarthrobacter aurescens (strain TC1)</name>
    <dbReference type="NCBI Taxonomy" id="290340"/>
    <lineage>
        <taxon>Bacteria</taxon>
        <taxon>Bacillati</taxon>
        <taxon>Actinomycetota</taxon>
        <taxon>Actinomycetes</taxon>
        <taxon>Micrococcales</taxon>
        <taxon>Micrococcaceae</taxon>
        <taxon>Paenarthrobacter</taxon>
    </lineage>
</organism>
<reference key="1">
    <citation type="journal article" date="2006" name="PLoS Genet.">
        <title>Secrets of soil survival revealed by the genome sequence of Arthrobacter aurescens TC1.</title>
        <authorList>
            <person name="Mongodin E.F."/>
            <person name="Shapir N."/>
            <person name="Daugherty S.C."/>
            <person name="DeBoy R.T."/>
            <person name="Emerson J.B."/>
            <person name="Shvartzbeyn A."/>
            <person name="Radune D."/>
            <person name="Vamathevan J."/>
            <person name="Riggs F."/>
            <person name="Grinberg V."/>
            <person name="Khouri H.M."/>
            <person name="Wackett L.P."/>
            <person name="Nelson K.E."/>
            <person name="Sadowsky M.J."/>
        </authorList>
    </citation>
    <scope>NUCLEOTIDE SEQUENCE [LARGE SCALE GENOMIC DNA]</scope>
    <source>
        <strain>TC1</strain>
    </source>
</reference>
<name>MSHD_PAEAT</name>